<sequence>MTTTIPLKEAVVVILDIGLGMTSKDSDGTTTTTSSIEDALRSVTLLYQQKLIYGKKDQLGLVLIGTKGTKNNLQDDGYQHITVVSDIEEPSIETLKYLENLAPGESKGDVIDSLIVAMDMLIRKTENKKYQKRIFLVTNARDPINTEDLSIVRDQFKKIDVKLNIIGVDFLEEIEENNMDTSNNNKNKSLKEKNEIFLREFAESVDGVLVPVKQALEMMSFFRSQSVMTRTSFRGALEITPELKIPVWGYLKMKQQLLPSLKKISSIAQQQIEQQQQQQQQQNKNKNNEDNEDNEEGKPNITLDVNQEVSYYSITDPDNEILKPDLLKGYKYGKSLIPFSKIDEDQLKYSSSKCLKVVGFTDRKSIPIYYNMGNTEVFVSQPGDKQSEEALSSFIHALVETDQVMVVRYVKTMNGSPYLGYMIPHVKSDYVCLYYNHLPLADDIRQYQFPPISPKNPLTRKSNIPNAEQLEATQQLIDSMDLMKSEFDEDGDPIQMLKPRFTYNPLLQHFYQCLHHRSLHPNTQIPKLDPIIAEYINPDQIIMNKSKQSIKNFADKFPLTKTTVFSKTPAISGGNTNGTTSNTNNTMIGGVKYHWKDGMLIGEEINLDSYVTDDGSEAKKRKVNDFSEFSLDKLVSGYVTEVGTINPVQNFKDMLNRRDMDLVDKAITLMKERILQLVNDSLRDQYYQKAFECIKELRVGCIRESEAEQFNGFLKDMRSLFQSKKRDDFWQYITADVTSILGEKSINLITQDECDSSEVTQEELDQFLDKKVKQFNPPPITNVNTDSVDDLFDQIE</sequence>
<protein>
    <recommendedName>
        <fullName>X-ray repair cross-complementing protein 5</fullName>
        <ecNumber>3.6.4.-</ecNumber>
    </recommendedName>
    <alternativeName>
        <fullName>ATP-dependent DNA helicase 2 subunit ku80</fullName>
    </alternativeName>
</protein>
<accession>Q54LY5</accession>
<dbReference type="EC" id="3.6.4.-"/>
<dbReference type="EMBL" id="AAFI02000085">
    <property type="protein sequence ID" value="EAL64327.1"/>
    <property type="molecule type" value="Genomic_DNA"/>
</dbReference>
<dbReference type="RefSeq" id="XP_637846.1">
    <property type="nucleotide sequence ID" value="XM_632754.1"/>
</dbReference>
<dbReference type="SMR" id="Q54LY5"/>
<dbReference type="FunCoup" id="Q54LY5">
    <property type="interactions" value="1095"/>
</dbReference>
<dbReference type="STRING" id="44689.Q54LY5"/>
<dbReference type="PaxDb" id="44689-DDB0232002"/>
<dbReference type="EnsemblProtists" id="EAL64327">
    <property type="protein sequence ID" value="EAL64327"/>
    <property type="gene ID" value="DDB_G0286303"/>
</dbReference>
<dbReference type="GeneID" id="8625560"/>
<dbReference type="KEGG" id="ddi:DDB_G0286303"/>
<dbReference type="dictyBase" id="DDB_G0286303">
    <property type="gene designation" value="ku80"/>
</dbReference>
<dbReference type="VEuPathDB" id="AmoebaDB:DDB_G0286303"/>
<dbReference type="eggNOG" id="KOG2326">
    <property type="taxonomic scope" value="Eukaryota"/>
</dbReference>
<dbReference type="HOGENOM" id="CLU_010975_2_1_1"/>
<dbReference type="InParanoid" id="Q54LY5"/>
<dbReference type="OMA" id="WAMQYVW"/>
<dbReference type="PhylomeDB" id="Q54LY5"/>
<dbReference type="Reactome" id="R-DDI-5693571">
    <property type="pathway name" value="Nonhomologous End-Joining (NHEJ)"/>
</dbReference>
<dbReference type="Reactome" id="R-DDI-6798695">
    <property type="pathway name" value="Neutrophil degranulation"/>
</dbReference>
<dbReference type="PRO" id="PR:Q54LY5"/>
<dbReference type="Proteomes" id="UP000002195">
    <property type="component" value="Chromosome 4"/>
</dbReference>
<dbReference type="GO" id="GO:0000785">
    <property type="term" value="C:chromatin"/>
    <property type="evidence" value="ECO:0000314"/>
    <property type="project" value="dictyBase"/>
</dbReference>
<dbReference type="GO" id="GO:0043564">
    <property type="term" value="C:Ku70:Ku80 complex"/>
    <property type="evidence" value="ECO:0000314"/>
    <property type="project" value="dictyBase"/>
</dbReference>
<dbReference type="GO" id="GO:0005634">
    <property type="term" value="C:nucleus"/>
    <property type="evidence" value="ECO:0000250"/>
    <property type="project" value="dictyBase"/>
</dbReference>
<dbReference type="GO" id="GO:0005524">
    <property type="term" value="F:ATP binding"/>
    <property type="evidence" value="ECO:0007669"/>
    <property type="project" value="UniProtKB-KW"/>
</dbReference>
<dbReference type="GO" id="GO:0003684">
    <property type="term" value="F:damaged DNA binding"/>
    <property type="evidence" value="ECO:0007669"/>
    <property type="project" value="InterPro"/>
</dbReference>
<dbReference type="GO" id="GO:0003678">
    <property type="term" value="F:DNA helicase activity"/>
    <property type="evidence" value="ECO:0007669"/>
    <property type="project" value="InterPro"/>
</dbReference>
<dbReference type="GO" id="GO:0003690">
    <property type="term" value="F:double-stranded DNA binding"/>
    <property type="evidence" value="ECO:0000250"/>
    <property type="project" value="dictyBase"/>
</dbReference>
<dbReference type="GO" id="GO:0016787">
    <property type="term" value="F:hydrolase activity"/>
    <property type="evidence" value="ECO:0007669"/>
    <property type="project" value="UniProtKB-KW"/>
</dbReference>
<dbReference type="GO" id="GO:0042162">
    <property type="term" value="F:telomeric DNA binding"/>
    <property type="evidence" value="ECO:0000318"/>
    <property type="project" value="GO_Central"/>
</dbReference>
<dbReference type="GO" id="GO:0006974">
    <property type="term" value="P:DNA damage response"/>
    <property type="evidence" value="ECO:0000315"/>
    <property type="project" value="dictyBase"/>
</dbReference>
<dbReference type="GO" id="GO:0006310">
    <property type="term" value="P:DNA recombination"/>
    <property type="evidence" value="ECO:0007669"/>
    <property type="project" value="UniProtKB-KW"/>
</dbReference>
<dbReference type="GO" id="GO:0006302">
    <property type="term" value="P:double-strand break repair"/>
    <property type="evidence" value="ECO:0000315"/>
    <property type="project" value="dictyBase"/>
</dbReference>
<dbReference type="GO" id="GO:0006303">
    <property type="term" value="P:double-strand break repair via nonhomologous end joining"/>
    <property type="evidence" value="ECO:0000315"/>
    <property type="project" value="dictyBase"/>
</dbReference>
<dbReference type="GO" id="GO:0030587">
    <property type="term" value="P:sorocarp development"/>
    <property type="evidence" value="ECO:0007001"/>
    <property type="project" value="dictyBase"/>
</dbReference>
<dbReference type="GO" id="GO:0000723">
    <property type="term" value="P:telomere maintenance"/>
    <property type="evidence" value="ECO:0000318"/>
    <property type="project" value="GO_Central"/>
</dbReference>
<dbReference type="CDD" id="cd00873">
    <property type="entry name" value="KU80"/>
    <property type="match status" value="1"/>
</dbReference>
<dbReference type="FunFam" id="2.40.290.10:FF:000006">
    <property type="entry name" value="ATP-dependent DNA helicase 2 subunit KU80"/>
    <property type="match status" value="1"/>
</dbReference>
<dbReference type="FunFam" id="3.40.50.410:FF:000073">
    <property type="entry name" value="ATP-dependent DNA helicase II subunit 2"/>
    <property type="match status" value="1"/>
</dbReference>
<dbReference type="FunFam" id="1.10.1600.10:FF:000002">
    <property type="entry name" value="X-ray repair cross-complementing protein 5"/>
    <property type="match status" value="1"/>
</dbReference>
<dbReference type="FunFam" id="1.25.40.240:FF:000001">
    <property type="entry name" value="X-ray repair cross-complementing protein 5"/>
    <property type="match status" value="1"/>
</dbReference>
<dbReference type="Gene3D" id="1.10.1600.10">
    <property type="match status" value="1"/>
</dbReference>
<dbReference type="Gene3D" id="2.40.290.10">
    <property type="match status" value="1"/>
</dbReference>
<dbReference type="Gene3D" id="1.25.40.240">
    <property type="entry name" value="Ku, C-terminal domain"/>
    <property type="match status" value="1"/>
</dbReference>
<dbReference type="Gene3D" id="3.40.50.410">
    <property type="entry name" value="von Willebrand factor, type A domain"/>
    <property type="match status" value="1"/>
</dbReference>
<dbReference type="InterPro" id="IPR006164">
    <property type="entry name" value="Ku70/Ku80_beta-barrel_dom"/>
</dbReference>
<dbReference type="InterPro" id="IPR024193">
    <property type="entry name" value="Ku80"/>
</dbReference>
<dbReference type="InterPro" id="IPR005160">
    <property type="entry name" value="Ku_C"/>
</dbReference>
<dbReference type="InterPro" id="IPR036494">
    <property type="entry name" value="Ku_C_sf"/>
</dbReference>
<dbReference type="InterPro" id="IPR005161">
    <property type="entry name" value="Ku_N"/>
</dbReference>
<dbReference type="InterPro" id="IPR014893">
    <property type="entry name" value="Ku_PK_bind"/>
</dbReference>
<dbReference type="InterPro" id="IPR016194">
    <property type="entry name" value="SPOC-like_C_dom_sf"/>
</dbReference>
<dbReference type="InterPro" id="IPR036465">
    <property type="entry name" value="vWFA_dom_sf"/>
</dbReference>
<dbReference type="PANTHER" id="PTHR12604">
    <property type="entry name" value="KU AUTOANTIGEN DNA HELICASE"/>
    <property type="match status" value="1"/>
</dbReference>
<dbReference type="PANTHER" id="PTHR12604:SF4">
    <property type="entry name" value="X-RAY REPAIR CROSS-COMPLEMENTING PROTEIN 5"/>
    <property type="match status" value="1"/>
</dbReference>
<dbReference type="Pfam" id="PF02735">
    <property type="entry name" value="Ku"/>
    <property type="match status" value="1"/>
</dbReference>
<dbReference type="Pfam" id="PF03730">
    <property type="entry name" value="Ku_C"/>
    <property type="match status" value="1"/>
</dbReference>
<dbReference type="Pfam" id="PF03731">
    <property type="entry name" value="Ku_N"/>
    <property type="match status" value="1"/>
</dbReference>
<dbReference type="Pfam" id="PF08785">
    <property type="entry name" value="Ku_PK_bind"/>
    <property type="match status" value="1"/>
</dbReference>
<dbReference type="PIRSF" id="PIRSF016570">
    <property type="entry name" value="Ku80"/>
    <property type="match status" value="1"/>
</dbReference>
<dbReference type="SMART" id="SM00559">
    <property type="entry name" value="Ku78"/>
    <property type="match status" value="1"/>
</dbReference>
<dbReference type="SUPFAM" id="SSF101420">
    <property type="entry name" value="C-terminal domain of Ku80"/>
    <property type="match status" value="1"/>
</dbReference>
<dbReference type="SUPFAM" id="SSF100939">
    <property type="entry name" value="SPOC domain-like"/>
    <property type="match status" value="1"/>
</dbReference>
<dbReference type="SUPFAM" id="SSF53300">
    <property type="entry name" value="vWA-like"/>
    <property type="match status" value="1"/>
</dbReference>
<comment type="function">
    <text evidence="1">Single-stranded DNA-dependent ATP-dependent helicase that plays a key role in DNA non-homologous end joining (NHEJ).</text>
</comment>
<comment type="subunit">
    <text evidence="1">Heterodimer of ku70 and ku80.</text>
</comment>
<comment type="subcellular location">
    <subcellularLocation>
        <location evidence="1">Nucleus</location>
    </subcellularLocation>
</comment>
<comment type="domain">
    <text evidence="2">The VWFA domain interacts with the KBM (Ku-binding motif) found in a number of DNA repair proteins.</text>
</comment>
<comment type="domain">
    <text evidence="2">The N-terminal and C-terminal regions are not required for binding to DNA or for degradation of the protein with only the central region being required for these processes.</text>
</comment>
<comment type="similarity">
    <text evidence="6">Belongs to the ku80 family.</text>
</comment>
<proteinExistence type="inferred from homology"/>
<name>XRCC5_DICDI</name>
<gene>
    <name type="primary">ku80</name>
    <name type="ORF">DDB_G0286303</name>
</gene>
<organism>
    <name type="scientific">Dictyostelium discoideum</name>
    <name type="common">Social amoeba</name>
    <dbReference type="NCBI Taxonomy" id="44689"/>
    <lineage>
        <taxon>Eukaryota</taxon>
        <taxon>Amoebozoa</taxon>
        <taxon>Evosea</taxon>
        <taxon>Eumycetozoa</taxon>
        <taxon>Dictyostelia</taxon>
        <taxon>Dictyosteliales</taxon>
        <taxon>Dictyosteliaceae</taxon>
        <taxon>Dictyostelium</taxon>
    </lineage>
</organism>
<reference key="1">
    <citation type="journal article" date="2005" name="Nature">
        <title>The genome of the social amoeba Dictyostelium discoideum.</title>
        <authorList>
            <person name="Eichinger L."/>
            <person name="Pachebat J.A."/>
            <person name="Gloeckner G."/>
            <person name="Rajandream M.A."/>
            <person name="Sucgang R."/>
            <person name="Berriman M."/>
            <person name="Song J."/>
            <person name="Olsen R."/>
            <person name="Szafranski K."/>
            <person name="Xu Q."/>
            <person name="Tunggal B."/>
            <person name="Kummerfeld S."/>
            <person name="Madera M."/>
            <person name="Konfortov B.A."/>
            <person name="Rivero F."/>
            <person name="Bankier A.T."/>
            <person name="Lehmann R."/>
            <person name="Hamlin N."/>
            <person name="Davies R."/>
            <person name="Gaudet P."/>
            <person name="Fey P."/>
            <person name="Pilcher K."/>
            <person name="Chen G."/>
            <person name="Saunders D."/>
            <person name="Sodergren E.J."/>
            <person name="Davis P."/>
            <person name="Kerhornou A."/>
            <person name="Nie X."/>
            <person name="Hall N."/>
            <person name="Anjard C."/>
            <person name="Hemphill L."/>
            <person name="Bason N."/>
            <person name="Farbrother P."/>
            <person name="Desany B."/>
            <person name="Just E."/>
            <person name="Morio T."/>
            <person name="Rost R."/>
            <person name="Churcher C.M."/>
            <person name="Cooper J."/>
            <person name="Haydock S."/>
            <person name="van Driessche N."/>
            <person name="Cronin A."/>
            <person name="Goodhead I."/>
            <person name="Muzny D.M."/>
            <person name="Mourier T."/>
            <person name="Pain A."/>
            <person name="Lu M."/>
            <person name="Harper D."/>
            <person name="Lindsay R."/>
            <person name="Hauser H."/>
            <person name="James K.D."/>
            <person name="Quiles M."/>
            <person name="Madan Babu M."/>
            <person name="Saito T."/>
            <person name="Buchrieser C."/>
            <person name="Wardroper A."/>
            <person name="Felder M."/>
            <person name="Thangavelu M."/>
            <person name="Johnson D."/>
            <person name="Knights A."/>
            <person name="Loulseged H."/>
            <person name="Mungall K.L."/>
            <person name="Oliver K."/>
            <person name="Price C."/>
            <person name="Quail M.A."/>
            <person name="Urushihara H."/>
            <person name="Hernandez J."/>
            <person name="Rabbinowitsch E."/>
            <person name="Steffen D."/>
            <person name="Sanders M."/>
            <person name="Ma J."/>
            <person name="Kohara Y."/>
            <person name="Sharp S."/>
            <person name="Simmonds M.N."/>
            <person name="Spiegler S."/>
            <person name="Tivey A."/>
            <person name="Sugano S."/>
            <person name="White B."/>
            <person name="Walker D."/>
            <person name="Woodward J.R."/>
            <person name="Winckler T."/>
            <person name="Tanaka Y."/>
            <person name="Shaulsky G."/>
            <person name="Schleicher M."/>
            <person name="Weinstock G.M."/>
            <person name="Rosenthal A."/>
            <person name="Cox E.C."/>
            <person name="Chisholm R.L."/>
            <person name="Gibbs R.A."/>
            <person name="Loomis W.F."/>
            <person name="Platzer M."/>
            <person name="Kay R.R."/>
            <person name="Williams J.G."/>
            <person name="Dear P.H."/>
            <person name="Noegel A.A."/>
            <person name="Barrell B.G."/>
            <person name="Kuspa A."/>
        </authorList>
    </citation>
    <scope>NUCLEOTIDE SEQUENCE [LARGE SCALE GENOMIC DNA]</scope>
    <source>
        <strain>AX4</strain>
    </source>
</reference>
<keyword id="KW-0067">ATP-binding</keyword>
<keyword id="KW-0227">DNA damage</keyword>
<keyword id="KW-0233">DNA recombination</keyword>
<keyword id="KW-0234">DNA repair</keyword>
<keyword id="KW-0238">DNA-binding</keyword>
<keyword id="KW-0347">Helicase</keyword>
<keyword id="KW-0378">Hydrolase</keyword>
<keyword id="KW-0547">Nucleotide-binding</keyword>
<keyword id="KW-0539">Nucleus</keyword>
<keyword id="KW-1185">Reference proteome</keyword>
<evidence type="ECO:0000250" key="1">
    <source>
        <dbReference type="UniProtKB" id="P13010"/>
    </source>
</evidence>
<evidence type="ECO:0000250" key="2">
    <source>
        <dbReference type="UniProtKB" id="Q6DDS9"/>
    </source>
</evidence>
<evidence type="ECO:0000255" key="3"/>
<evidence type="ECO:0000255" key="4">
    <source>
        <dbReference type="PROSITE-ProRule" id="PRU00219"/>
    </source>
</evidence>
<evidence type="ECO:0000256" key="5">
    <source>
        <dbReference type="SAM" id="MobiDB-lite"/>
    </source>
</evidence>
<evidence type="ECO:0000305" key="6"/>
<feature type="chain" id="PRO_0000377483" description="X-ray repair cross-complementing protein 5">
    <location>
        <begin position="1"/>
        <end position="796"/>
    </location>
</feature>
<feature type="domain" description="VWFA" evidence="4">
    <location>
        <begin position="10"/>
        <end position="205"/>
    </location>
</feature>
<feature type="domain" description="Ku" evidence="3">
    <location>
        <begin position="240"/>
        <end position="471"/>
    </location>
</feature>
<feature type="region of interest" description="Disordered" evidence="5">
    <location>
        <begin position="272"/>
        <end position="302"/>
    </location>
</feature>
<feature type="compositionally biased region" description="Low complexity" evidence="5">
    <location>
        <begin position="272"/>
        <end position="285"/>
    </location>
</feature>